<organism>
    <name type="scientific">Streptococcus mutans serotype c (strain ATCC 700610 / UA159)</name>
    <dbReference type="NCBI Taxonomy" id="210007"/>
    <lineage>
        <taxon>Bacteria</taxon>
        <taxon>Bacillati</taxon>
        <taxon>Bacillota</taxon>
        <taxon>Bacilli</taxon>
        <taxon>Lactobacillales</taxon>
        <taxon>Streptococcaceae</taxon>
        <taxon>Streptococcus</taxon>
    </lineage>
</organism>
<reference key="1">
    <citation type="journal article" date="2002" name="Proc. Natl. Acad. Sci. U.S.A.">
        <title>Genome sequence of Streptococcus mutans UA159, a cariogenic dental pathogen.</title>
        <authorList>
            <person name="Ajdic D.J."/>
            <person name="McShan W.M."/>
            <person name="McLaughlin R.E."/>
            <person name="Savic G."/>
            <person name="Chang J."/>
            <person name="Carson M.B."/>
            <person name="Primeaux C."/>
            <person name="Tian R."/>
            <person name="Kenton S."/>
            <person name="Jia H.G."/>
            <person name="Lin S.P."/>
            <person name="Qian Y."/>
            <person name="Li S."/>
            <person name="Zhu H."/>
            <person name="Najar F.Z."/>
            <person name="Lai H."/>
            <person name="White J."/>
            <person name="Roe B.A."/>
            <person name="Ferretti J.J."/>
        </authorList>
    </citation>
    <scope>NUCLEOTIDE SEQUENCE [LARGE SCALE GENOMIC DNA]</scope>
    <source>
        <strain>ATCC 700610 / UA159</strain>
    </source>
</reference>
<sequence>MKERMNELVQLLNQYAREYYTKDNPSVSDAEYDKLYRELVELEKEFPEDILPNSPTHRVGDLVLDGFEKYRHEYPLFSLQDAFSREELDAFDRRIKAEFPQADYLAELKIDGLSISLTYVNGRLRVGATRGDGTVGENITENLKRVRDIPLHLPENIDLTVRGECYLPKASFKTINAERRENGETEFANPRNAAAGTLRQLDTKVVAKRKLATFIYQEAGPTAASSQEAVLESFAKLGFTVNPRHIISSSMDAIWQFIEDVAKERAELAYDIDGVVIKVNSLALQEALGFTVKAPRWAIAYKFPAEEKTAEILSVDWTVGRTGVVTPTANLTPVQLAGTTVSRATLHNVDYIAEKDIRIGDIVVVYKAGDIIPAVLHVVENKRDQQVPLPIPTVCPSCQSELIHFEDEVALRCVNPRCPAQLKEKLIHFASRDAMNIIGLGPAIVEKLFTAELICDVADIYQLTPENLMQLEGIKEKSATKLYKAIQASKANSAEKLLFGLGIRHVGSKASRLLMERFESLEQLAAADFDDIAAIDGLGIVIAESLKTYFATAGAQKLLIELKTAGLNLTYLGKKTASDAALTGMTIVLTGKLANLTRSQAKEKLQSLGANVAGSVSKKTSLVIAGSDAGSKLEKAKTLGIEIKDEAWLESL</sequence>
<protein>
    <recommendedName>
        <fullName evidence="1">DNA ligase</fullName>
        <ecNumber evidence="1">6.5.1.2</ecNumber>
    </recommendedName>
    <alternativeName>
        <fullName evidence="1">Polydeoxyribonucleotide synthase [NAD(+)]</fullName>
    </alternativeName>
</protein>
<accession>Q8DT49</accession>
<keyword id="KW-0227">DNA damage</keyword>
<keyword id="KW-0234">DNA repair</keyword>
<keyword id="KW-0235">DNA replication</keyword>
<keyword id="KW-0436">Ligase</keyword>
<keyword id="KW-0460">Magnesium</keyword>
<keyword id="KW-0464">Manganese</keyword>
<keyword id="KW-0479">Metal-binding</keyword>
<keyword id="KW-0520">NAD</keyword>
<keyword id="KW-1185">Reference proteome</keyword>
<keyword id="KW-0862">Zinc</keyword>
<name>DNLJ_STRMU</name>
<feature type="chain" id="PRO_0000313453" description="DNA ligase">
    <location>
        <begin position="1"/>
        <end position="652"/>
    </location>
</feature>
<feature type="domain" description="BRCT" evidence="1">
    <location>
        <begin position="577"/>
        <end position="652"/>
    </location>
</feature>
<feature type="active site" description="N6-AMP-lysine intermediate" evidence="1">
    <location>
        <position position="109"/>
    </location>
</feature>
<feature type="binding site" evidence="1">
    <location>
        <begin position="29"/>
        <end position="33"/>
    </location>
    <ligand>
        <name>NAD(+)</name>
        <dbReference type="ChEBI" id="CHEBI:57540"/>
    </ligand>
</feature>
<feature type="binding site" evidence="1">
    <location>
        <begin position="78"/>
        <end position="79"/>
    </location>
    <ligand>
        <name>NAD(+)</name>
        <dbReference type="ChEBI" id="CHEBI:57540"/>
    </ligand>
</feature>
<feature type="binding site" evidence="1">
    <location>
        <position position="107"/>
    </location>
    <ligand>
        <name>NAD(+)</name>
        <dbReference type="ChEBI" id="CHEBI:57540"/>
    </ligand>
</feature>
<feature type="binding site" evidence="1">
    <location>
        <position position="130"/>
    </location>
    <ligand>
        <name>NAD(+)</name>
        <dbReference type="ChEBI" id="CHEBI:57540"/>
    </ligand>
</feature>
<feature type="binding site" evidence="1">
    <location>
        <position position="164"/>
    </location>
    <ligand>
        <name>NAD(+)</name>
        <dbReference type="ChEBI" id="CHEBI:57540"/>
    </ligand>
</feature>
<feature type="binding site" evidence="1">
    <location>
        <position position="278"/>
    </location>
    <ligand>
        <name>NAD(+)</name>
        <dbReference type="ChEBI" id="CHEBI:57540"/>
    </ligand>
</feature>
<feature type="binding site" evidence="1">
    <location>
        <position position="302"/>
    </location>
    <ligand>
        <name>NAD(+)</name>
        <dbReference type="ChEBI" id="CHEBI:57540"/>
    </ligand>
</feature>
<feature type="binding site" evidence="1">
    <location>
        <position position="395"/>
    </location>
    <ligand>
        <name>Zn(2+)</name>
        <dbReference type="ChEBI" id="CHEBI:29105"/>
    </ligand>
</feature>
<feature type="binding site" evidence="1">
    <location>
        <position position="398"/>
    </location>
    <ligand>
        <name>Zn(2+)</name>
        <dbReference type="ChEBI" id="CHEBI:29105"/>
    </ligand>
</feature>
<feature type="binding site" evidence="1">
    <location>
        <position position="413"/>
    </location>
    <ligand>
        <name>Zn(2+)</name>
        <dbReference type="ChEBI" id="CHEBI:29105"/>
    </ligand>
</feature>
<feature type="binding site" evidence="1">
    <location>
        <position position="418"/>
    </location>
    <ligand>
        <name>Zn(2+)</name>
        <dbReference type="ChEBI" id="CHEBI:29105"/>
    </ligand>
</feature>
<gene>
    <name evidence="1" type="primary">ligA</name>
    <name type="ordered locus">SMU_1543</name>
</gene>
<proteinExistence type="inferred from homology"/>
<evidence type="ECO:0000255" key="1">
    <source>
        <dbReference type="HAMAP-Rule" id="MF_01588"/>
    </source>
</evidence>
<comment type="function">
    <text evidence="1">DNA ligase that catalyzes the formation of phosphodiester linkages between 5'-phosphoryl and 3'-hydroxyl groups in double-stranded DNA using NAD as a coenzyme and as the energy source for the reaction. It is essential for DNA replication and repair of damaged DNA.</text>
</comment>
<comment type="catalytic activity">
    <reaction evidence="1">
        <text>NAD(+) + (deoxyribonucleotide)n-3'-hydroxyl + 5'-phospho-(deoxyribonucleotide)m = (deoxyribonucleotide)n+m + AMP + beta-nicotinamide D-nucleotide.</text>
        <dbReference type="EC" id="6.5.1.2"/>
    </reaction>
</comment>
<comment type="cofactor">
    <cofactor evidence="1">
        <name>Mg(2+)</name>
        <dbReference type="ChEBI" id="CHEBI:18420"/>
    </cofactor>
    <cofactor evidence="1">
        <name>Mn(2+)</name>
        <dbReference type="ChEBI" id="CHEBI:29035"/>
    </cofactor>
</comment>
<comment type="similarity">
    <text evidence="1">Belongs to the NAD-dependent DNA ligase family. LigA subfamily.</text>
</comment>
<dbReference type="EC" id="6.5.1.2" evidence="1"/>
<dbReference type="EMBL" id="AE014133">
    <property type="protein sequence ID" value="AAN59192.1"/>
    <property type="molecule type" value="Genomic_DNA"/>
</dbReference>
<dbReference type="RefSeq" id="NP_721886.1">
    <property type="nucleotide sequence ID" value="NC_004350.2"/>
</dbReference>
<dbReference type="RefSeq" id="WP_002268549.1">
    <property type="nucleotide sequence ID" value="NC_004350.2"/>
</dbReference>
<dbReference type="SMR" id="Q8DT49"/>
<dbReference type="STRING" id="210007.SMU_1543"/>
<dbReference type="GeneID" id="93859025"/>
<dbReference type="KEGG" id="smu:SMU_1543"/>
<dbReference type="PATRIC" id="fig|210007.7.peg.1374"/>
<dbReference type="eggNOG" id="COG0272">
    <property type="taxonomic scope" value="Bacteria"/>
</dbReference>
<dbReference type="HOGENOM" id="CLU_007764_2_1_9"/>
<dbReference type="OrthoDB" id="9759736at2"/>
<dbReference type="PhylomeDB" id="Q8DT49"/>
<dbReference type="Proteomes" id="UP000002512">
    <property type="component" value="Chromosome"/>
</dbReference>
<dbReference type="GO" id="GO:0005829">
    <property type="term" value="C:cytosol"/>
    <property type="evidence" value="ECO:0007669"/>
    <property type="project" value="TreeGrafter"/>
</dbReference>
<dbReference type="GO" id="GO:0003677">
    <property type="term" value="F:DNA binding"/>
    <property type="evidence" value="ECO:0007669"/>
    <property type="project" value="InterPro"/>
</dbReference>
<dbReference type="GO" id="GO:0003911">
    <property type="term" value="F:DNA ligase (NAD+) activity"/>
    <property type="evidence" value="ECO:0007669"/>
    <property type="project" value="UniProtKB-UniRule"/>
</dbReference>
<dbReference type="GO" id="GO:0046872">
    <property type="term" value="F:metal ion binding"/>
    <property type="evidence" value="ECO:0007669"/>
    <property type="project" value="UniProtKB-KW"/>
</dbReference>
<dbReference type="GO" id="GO:0006281">
    <property type="term" value="P:DNA repair"/>
    <property type="evidence" value="ECO:0007669"/>
    <property type="project" value="UniProtKB-KW"/>
</dbReference>
<dbReference type="GO" id="GO:0006260">
    <property type="term" value="P:DNA replication"/>
    <property type="evidence" value="ECO:0007669"/>
    <property type="project" value="UniProtKB-KW"/>
</dbReference>
<dbReference type="CDD" id="cd17748">
    <property type="entry name" value="BRCT_DNA_ligase_like"/>
    <property type="match status" value="1"/>
</dbReference>
<dbReference type="CDD" id="cd00114">
    <property type="entry name" value="LIGANc"/>
    <property type="match status" value="1"/>
</dbReference>
<dbReference type="FunFam" id="1.10.150.20:FF:000007">
    <property type="entry name" value="DNA ligase"/>
    <property type="match status" value="1"/>
</dbReference>
<dbReference type="FunFam" id="2.40.50.140:FF:000012">
    <property type="entry name" value="DNA ligase"/>
    <property type="match status" value="1"/>
</dbReference>
<dbReference type="FunFam" id="3.30.470.30:FF:000001">
    <property type="entry name" value="DNA ligase"/>
    <property type="match status" value="1"/>
</dbReference>
<dbReference type="Gene3D" id="6.20.10.30">
    <property type="match status" value="1"/>
</dbReference>
<dbReference type="Gene3D" id="1.10.150.20">
    <property type="entry name" value="5' to 3' exonuclease, C-terminal subdomain"/>
    <property type="match status" value="2"/>
</dbReference>
<dbReference type="Gene3D" id="3.40.50.10190">
    <property type="entry name" value="BRCT domain"/>
    <property type="match status" value="1"/>
</dbReference>
<dbReference type="Gene3D" id="3.30.470.30">
    <property type="entry name" value="DNA ligase/mRNA capping enzyme"/>
    <property type="match status" value="1"/>
</dbReference>
<dbReference type="Gene3D" id="1.10.287.610">
    <property type="entry name" value="Helix hairpin bin"/>
    <property type="match status" value="1"/>
</dbReference>
<dbReference type="Gene3D" id="2.40.50.140">
    <property type="entry name" value="Nucleic acid-binding proteins"/>
    <property type="match status" value="1"/>
</dbReference>
<dbReference type="HAMAP" id="MF_01588">
    <property type="entry name" value="DNA_ligase_A"/>
    <property type="match status" value="1"/>
</dbReference>
<dbReference type="InterPro" id="IPR001357">
    <property type="entry name" value="BRCT_dom"/>
</dbReference>
<dbReference type="InterPro" id="IPR036420">
    <property type="entry name" value="BRCT_dom_sf"/>
</dbReference>
<dbReference type="InterPro" id="IPR041663">
    <property type="entry name" value="DisA/LigA_HHH"/>
</dbReference>
<dbReference type="InterPro" id="IPR001679">
    <property type="entry name" value="DNA_ligase"/>
</dbReference>
<dbReference type="InterPro" id="IPR018239">
    <property type="entry name" value="DNA_ligase_AS"/>
</dbReference>
<dbReference type="InterPro" id="IPR033136">
    <property type="entry name" value="DNA_ligase_CS"/>
</dbReference>
<dbReference type="InterPro" id="IPR013839">
    <property type="entry name" value="DNAligase_adenylation"/>
</dbReference>
<dbReference type="InterPro" id="IPR013840">
    <property type="entry name" value="DNAligase_N"/>
</dbReference>
<dbReference type="InterPro" id="IPR003583">
    <property type="entry name" value="Hlx-hairpin-Hlx_DNA-bd_motif"/>
</dbReference>
<dbReference type="InterPro" id="IPR012340">
    <property type="entry name" value="NA-bd_OB-fold"/>
</dbReference>
<dbReference type="InterPro" id="IPR004150">
    <property type="entry name" value="NAD_DNA_ligase_OB"/>
</dbReference>
<dbReference type="InterPro" id="IPR010994">
    <property type="entry name" value="RuvA_2-like"/>
</dbReference>
<dbReference type="InterPro" id="IPR004149">
    <property type="entry name" value="Znf_DNAligase_C4"/>
</dbReference>
<dbReference type="NCBIfam" id="TIGR00575">
    <property type="entry name" value="dnlj"/>
    <property type="match status" value="1"/>
</dbReference>
<dbReference type="NCBIfam" id="NF005932">
    <property type="entry name" value="PRK07956.1"/>
    <property type="match status" value="1"/>
</dbReference>
<dbReference type="PANTHER" id="PTHR23389">
    <property type="entry name" value="CHROMOSOME TRANSMISSION FIDELITY FACTOR 18"/>
    <property type="match status" value="1"/>
</dbReference>
<dbReference type="PANTHER" id="PTHR23389:SF9">
    <property type="entry name" value="DNA LIGASE"/>
    <property type="match status" value="1"/>
</dbReference>
<dbReference type="Pfam" id="PF00533">
    <property type="entry name" value="BRCT"/>
    <property type="match status" value="1"/>
</dbReference>
<dbReference type="Pfam" id="PF01653">
    <property type="entry name" value="DNA_ligase_aden"/>
    <property type="match status" value="1"/>
</dbReference>
<dbReference type="Pfam" id="PF03120">
    <property type="entry name" value="DNA_ligase_OB"/>
    <property type="match status" value="1"/>
</dbReference>
<dbReference type="Pfam" id="PF03119">
    <property type="entry name" value="DNA_ligase_ZBD"/>
    <property type="match status" value="1"/>
</dbReference>
<dbReference type="Pfam" id="PF12826">
    <property type="entry name" value="HHH_2"/>
    <property type="match status" value="1"/>
</dbReference>
<dbReference type="Pfam" id="PF14520">
    <property type="entry name" value="HHH_5"/>
    <property type="match status" value="1"/>
</dbReference>
<dbReference type="Pfam" id="PF22745">
    <property type="entry name" value="Nlig-Ia"/>
    <property type="match status" value="1"/>
</dbReference>
<dbReference type="PIRSF" id="PIRSF001604">
    <property type="entry name" value="LigA"/>
    <property type="match status" value="1"/>
</dbReference>
<dbReference type="SMART" id="SM00292">
    <property type="entry name" value="BRCT"/>
    <property type="match status" value="1"/>
</dbReference>
<dbReference type="SMART" id="SM00278">
    <property type="entry name" value="HhH1"/>
    <property type="match status" value="3"/>
</dbReference>
<dbReference type="SMART" id="SM00532">
    <property type="entry name" value="LIGANc"/>
    <property type="match status" value="1"/>
</dbReference>
<dbReference type="SUPFAM" id="SSF52113">
    <property type="entry name" value="BRCT domain"/>
    <property type="match status" value="1"/>
</dbReference>
<dbReference type="SUPFAM" id="SSF56091">
    <property type="entry name" value="DNA ligase/mRNA capping enzyme, catalytic domain"/>
    <property type="match status" value="1"/>
</dbReference>
<dbReference type="SUPFAM" id="SSF50249">
    <property type="entry name" value="Nucleic acid-binding proteins"/>
    <property type="match status" value="1"/>
</dbReference>
<dbReference type="SUPFAM" id="SSF47781">
    <property type="entry name" value="RuvA domain 2-like"/>
    <property type="match status" value="1"/>
</dbReference>
<dbReference type="PROSITE" id="PS50172">
    <property type="entry name" value="BRCT"/>
    <property type="match status" value="1"/>
</dbReference>
<dbReference type="PROSITE" id="PS01055">
    <property type="entry name" value="DNA_LIGASE_N1"/>
    <property type="match status" value="1"/>
</dbReference>
<dbReference type="PROSITE" id="PS01056">
    <property type="entry name" value="DNA_LIGASE_N2"/>
    <property type="match status" value="1"/>
</dbReference>